<name>PARC_STRP1</name>
<dbReference type="EC" id="5.6.2.2" evidence="1"/>
<dbReference type="EMBL" id="AF220946">
    <property type="protein sequence ID" value="AAF63267.1"/>
    <property type="molecule type" value="Genomic_DNA"/>
</dbReference>
<dbReference type="EMBL" id="AE004092">
    <property type="protein sequence ID" value="AAK33826.1"/>
    <property type="molecule type" value="Genomic_DNA"/>
</dbReference>
<dbReference type="EMBL" id="CP000017">
    <property type="protein sequence ID" value="AAZ51330.1"/>
    <property type="molecule type" value="Genomic_DNA"/>
</dbReference>
<dbReference type="RefSeq" id="NP_269105.1">
    <property type="nucleotide sequence ID" value="NC_002737.2"/>
</dbReference>
<dbReference type="SMR" id="Q9L7Q4"/>
<dbReference type="PaxDb" id="1314-HKU360_00722"/>
<dbReference type="KEGG" id="spy:SPy_0910"/>
<dbReference type="KEGG" id="spz:M5005_Spy0712"/>
<dbReference type="PATRIC" id="fig|160490.10.peg.782"/>
<dbReference type="HOGENOM" id="CLU_002977_6_1_9"/>
<dbReference type="OMA" id="MNVPDGH"/>
<dbReference type="Proteomes" id="UP000000750">
    <property type="component" value="Chromosome"/>
</dbReference>
<dbReference type="GO" id="GO:0005694">
    <property type="term" value="C:chromosome"/>
    <property type="evidence" value="ECO:0007669"/>
    <property type="project" value="InterPro"/>
</dbReference>
<dbReference type="GO" id="GO:0005737">
    <property type="term" value="C:cytoplasm"/>
    <property type="evidence" value="ECO:0007669"/>
    <property type="project" value="TreeGrafter"/>
</dbReference>
<dbReference type="GO" id="GO:0009330">
    <property type="term" value="C:DNA topoisomerase type II (double strand cut, ATP-hydrolyzing) complex"/>
    <property type="evidence" value="ECO:0007669"/>
    <property type="project" value="TreeGrafter"/>
</dbReference>
<dbReference type="GO" id="GO:0019897">
    <property type="term" value="C:extrinsic component of plasma membrane"/>
    <property type="evidence" value="ECO:0007669"/>
    <property type="project" value="UniProtKB-UniRule"/>
</dbReference>
<dbReference type="GO" id="GO:0005524">
    <property type="term" value="F:ATP binding"/>
    <property type="evidence" value="ECO:0007669"/>
    <property type="project" value="InterPro"/>
</dbReference>
<dbReference type="GO" id="GO:0003677">
    <property type="term" value="F:DNA binding"/>
    <property type="evidence" value="ECO:0007669"/>
    <property type="project" value="UniProtKB-UniRule"/>
</dbReference>
<dbReference type="GO" id="GO:0034335">
    <property type="term" value="F:DNA negative supercoiling activity"/>
    <property type="evidence" value="ECO:0007669"/>
    <property type="project" value="UniProtKB-ARBA"/>
</dbReference>
<dbReference type="GO" id="GO:0007059">
    <property type="term" value="P:chromosome segregation"/>
    <property type="evidence" value="ECO:0007669"/>
    <property type="project" value="UniProtKB-UniRule"/>
</dbReference>
<dbReference type="GO" id="GO:0006265">
    <property type="term" value="P:DNA topological change"/>
    <property type="evidence" value="ECO:0007669"/>
    <property type="project" value="UniProtKB-UniRule"/>
</dbReference>
<dbReference type="CDD" id="cd00187">
    <property type="entry name" value="TOP4c"/>
    <property type="match status" value="1"/>
</dbReference>
<dbReference type="FunFam" id="1.10.268.10:FF:000001">
    <property type="entry name" value="DNA gyrase subunit A"/>
    <property type="match status" value="1"/>
</dbReference>
<dbReference type="FunFam" id="3.30.1360.40:FF:000002">
    <property type="entry name" value="DNA gyrase subunit A"/>
    <property type="match status" value="1"/>
</dbReference>
<dbReference type="FunFam" id="3.90.199.10:FF:000001">
    <property type="entry name" value="DNA gyrase subunit A"/>
    <property type="match status" value="1"/>
</dbReference>
<dbReference type="FunFam" id="2.120.10.90:FF:000005">
    <property type="entry name" value="DNA topoisomerase 4 subunit A"/>
    <property type="match status" value="1"/>
</dbReference>
<dbReference type="Gene3D" id="3.30.1360.40">
    <property type="match status" value="1"/>
</dbReference>
<dbReference type="Gene3D" id="2.120.10.90">
    <property type="entry name" value="DNA gyrase/topoisomerase IV, subunit A, C-terminal"/>
    <property type="match status" value="1"/>
</dbReference>
<dbReference type="Gene3D" id="3.90.199.10">
    <property type="entry name" value="Topoisomerase II, domain 5"/>
    <property type="match status" value="1"/>
</dbReference>
<dbReference type="Gene3D" id="1.10.268.10">
    <property type="entry name" value="Topoisomerase, domain 3"/>
    <property type="match status" value="1"/>
</dbReference>
<dbReference type="HAMAP" id="MF_00937">
    <property type="entry name" value="ParC_type2"/>
    <property type="match status" value="1"/>
</dbReference>
<dbReference type="InterPro" id="IPR006691">
    <property type="entry name" value="GyrA/parC_rep"/>
</dbReference>
<dbReference type="InterPro" id="IPR035516">
    <property type="entry name" value="Gyrase/topoIV_suA_C"/>
</dbReference>
<dbReference type="InterPro" id="IPR013760">
    <property type="entry name" value="Topo_IIA-like_dom_sf"/>
</dbReference>
<dbReference type="InterPro" id="IPR013758">
    <property type="entry name" value="Topo_IIA_A/C_ab"/>
</dbReference>
<dbReference type="InterPro" id="IPR013757">
    <property type="entry name" value="Topo_IIA_A_a_sf"/>
</dbReference>
<dbReference type="InterPro" id="IPR002205">
    <property type="entry name" value="Topo_IIA_dom_A"/>
</dbReference>
<dbReference type="InterPro" id="IPR005741">
    <property type="entry name" value="TopoIV_A_Gpos"/>
</dbReference>
<dbReference type="InterPro" id="IPR050220">
    <property type="entry name" value="Type_II_DNA_Topoisomerases"/>
</dbReference>
<dbReference type="NCBIfam" id="TIGR01061">
    <property type="entry name" value="parC_Gpos"/>
    <property type="match status" value="1"/>
</dbReference>
<dbReference type="NCBIfam" id="NF004044">
    <property type="entry name" value="PRK05561.1"/>
    <property type="match status" value="1"/>
</dbReference>
<dbReference type="PANTHER" id="PTHR43493">
    <property type="entry name" value="DNA GYRASE/TOPOISOMERASE SUBUNIT A"/>
    <property type="match status" value="1"/>
</dbReference>
<dbReference type="PANTHER" id="PTHR43493:SF9">
    <property type="entry name" value="DNA TOPOISOMERASE 4 SUBUNIT A"/>
    <property type="match status" value="1"/>
</dbReference>
<dbReference type="Pfam" id="PF03989">
    <property type="entry name" value="DNA_gyraseA_C"/>
    <property type="match status" value="4"/>
</dbReference>
<dbReference type="Pfam" id="PF00521">
    <property type="entry name" value="DNA_topoisoIV"/>
    <property type="match status" value="1"/>
</dbReference>
<dbReference type="SMART" id="SM00434">
    <property type="entry name" value="TOP4c"/>
    <property type="match status" value="1"/>
</dbReference>
<dbReference type="SUPFAM" id="SSF101904">
    <property type="entry name" value="GyrA/ParC C-terminal domain-like"/>
    <property type="match status" value="1"/>
</dbReference>
<dbReference type="SUPFAM" id="SSF56719">
    <property type="entry name" value="Type II DNA topoisomerase"/>
    <property type="match status" value="1"/>
</dbReference>
<dbReference type="PROSITE" id="PS52040">
    <property type="entry name" value="TOPO_IIA"/>
    <property type="match status" value="1"/>
</dbReference>
<accession>Q9L7Q4</accession>
<accession>Q48Z88</accession>
<reference key="1">
    <citation type="submission" date="2000-01" db="EMBL/GenBank/DDBJ databases">
        <title>Resistance to multiple fluoroquinolone antibiotics in a clinical isolate of Streptococcus pyogenes: identification of gyrA and parC genes and point mutations responsible for the resistances.</title>
        <authorList>
            <person name="Yan S.S."/>
            <person name="Gill V.J."/>
            <person name="Fedorko D.P."/>
        </authorList>
    </citation>
    <scope>NUCLEOTIDE SEQUENCE [GENOMIC DNA]</scope>
    <source>
        <strain>ATCC 700294 / SF370 / Serotype M1</strain>
    </source>
</reference>
<reference key="2">
    <citation type="journal article" date="2001" name="Proc. Natl. Acad. Sci. U.S.A.">
        <title>Complete genome sequence of an M1 strain of Streptococcus pyogenes.</title>
        <authorList>
            <person name="Ferretti J.J."/>
            <person name="McShan W.M."/>
            <person name="Ajdic D.J."/>
            <person name="Savic D.J."/>
            <person name="Savic G."/>
            <person name="Lyon K."/>
            <person name="Primeaux C."/>
            <person name="Sezate S."/>
            <person name="Suvorov A.N."/>
            <person name="Kenton S."/>
            <person name="Lai H.S."/>
            <person name="Lin S.P."/>
            <person name="Qian Y."/>
            <person name="Jia H.G."/>
            <person name="Najar F.Z."/>
            <person name="Ren Q."/>
            <person name="Zhu H."/>
            <person name="Song L."/>
            <person name="White J."/>
            <person name="Yuan X."/>
            <person name="Clifton S.W."/>
            <person name="Roe B.A."/>
            <person name="McLaughlin R.E."/>
        </authorList>
    </citation>
    <scope>NUCLEOTIDE SEQUENCE [LARGE SCALE GENOMIC DNA]</scope>
    <source>
        <strain>ATCC 700294 / SF370 / Serotype M1</strain>
    </source>
</reference>
<reference key="3">
    <citation type="journal article" date="2005" name="J. Infect. Dis.">
        <title>Evolutionary origin and emergence of a highly successful clone of serotype M1 group A Streptococcus involved multiple horizontal gene transfer events.</title>
        <authorList>
            <person name="Sumby P."/>
            <person name="Porcella S.F."/>
            <person name="Madrigal A.G."/>
            <person name="Barbian K.D."/>
            <person name="Virtaneva K."/>
            <person name="Ricklefs S.M."/>
            <person name="Sturdevant D.E."/>
            <person name="Graham M.R."/>
            <person name="Vuopio-Varkila J."/>
            <person name="Hoe N.P."/>
            <person name="Musser J.M."/>
        </authorList>
    </citation>
    <scope>NUCLEOTIDE SEQUENCE [LARGE SCALE GENOMIC DNA]</scope>
    <source>
        <strain>ATCC BAA-947 / MGAS5005 / Serotype M1</strain>
    </source>
</reference>
<evidence type="ECO:0000255" key="1">
    <source>
        <dbReference type="HAMAP-Rule" id="MF_00937"/>
    </source>
</evidence>
<evidence type="ECO:0000255" key="2">
    <source>
        <dbReference type="PROSITE-ProRule" id="PRU01384"/>
    </source>
</evidence>
<evidence type="ECO:0000305" key="3"/>
<feature type="chain" id="PRO_0000145419" description="DNA topoisomerase 4 subunit A">
    <location>
        <begin position="1"/>
        <end position="819"/>
    </location>
</feature>
<feature type="domain" description="Topo IIA-type catalytic" evidence="2">
    <location>
        <begin position="30"/>
        <end position="496"/>
    </location>
</feature>
<feature type="active site" description="O-(5'-phospho-DNA)-tyrosine intermediate" evidence="1">
    <location>
        <position position="118"/>
    </location>
</feature>
<feature type="site" description="Interaction with DNA" evidence="1">
    <location>
        <position position="38"/>
    </location>
</feature>
<feature type="site" description="Interaction with DNA" evidence="1">
    <location>
        <position position="74"/>
    </location>
</feature>
<feature type="site" description="Interaction with DNA" evidence="1">
    <location>
        <position position="76"/>
    </location>
</feature>
<feature type="site" description="Interaction with DNA" evidence="1">
    <location>
        <position position="87"/>
    </location>
</feature>
<feature type="site" description="Interaction with DNA" evidence="1">
    <location>
        <position position="93"/>
    </location>
</feature>
<feature type="site" description="Transition state stabilizer" evidence="1">
    <location>
        <position position="117"/>
    </location>
</feature>
<feature type="sequence conflict" description="In Ref. 3; AAZ51330." evidence="3" ref="3">
    <original>I</original>
    <variation>T</variation>
    <location>
        <position position="798"/>
    </location>
</feature>
<organism>
    <name type="scientific">Streptococcus pyogenes serotype M1</name>
    <dbReference type="NCBI Taxonomy" id="301447"/>
    <lineage>
        <taxon>Bacteria</taxon>
        <taxon>Bacillati</taxon>
        <taxon>Bacillota</taxon>
        <taxon>Bacilli</taxon>
        <taxon>Lactobacillales</taxon>
        <taxon>Streptococcaceae</taxon>
        <taxon>Streptococcus</taxon>
    </lineage>
</organism>
<protein>
    <recommendedName>
        <fullName evidence="1">DNA topoisomerase 4 subunit A</fullName>
        <ecNumber evidence="1">5.6.2.2</ecNumber>
    </recommendedName>
    <alternativeName>
        <fullName evidence="1">Topoisomerase IV subunit A</fullName>
    </alternativeName>
</protein>
<proteinExistence type="inferred from homology"/>
<gene>
    <name evidence="1" type="primary">parC</name>
    <name type="ordered locus">SPy_0910</name>
    <name type="ordered locus">M5005_Spy0712</name>
</gene>
<comment type="function">
    <text evidence="1">Topoisomerase IV is essential for chromosome segregation. It relaxes supercoiled DNA. Performs the decatenation events required during the replication of a circular DNA molecule.</text>
</comment>
<comment type="catalytic activity">
    <reaction evidence="1">
        <text>ATP-dependent breakage, passage and rejoining of double-stranded DNA.</text>
        <dbReference type="EC" id="5.6.2.2"/>
    </reaction>
</comment>
<comment type="subunit">
    <text evidence="1">Heterotetramer composed of ParC and ParE.</text>
</comment>
<comment type="subcellular location">
    <subcellularLocation>
        <location evidence="1">Cell membrane</location>
        <topology evidence="1">Peripheral membrane protein</topology>
    </subcellularLocation>
</comment>
<comment type="similarity">
    <text evidence="1">Belongs to the type II topoisomerase GyrA/ParC subunit family. ParC type 2 subfamily.</text>
</comment>
<keyword id="KW-1003">Cell membrane</keyword>
<keyword id="KW-0238">DNA-binding</keyword>
<keyword id="KW-0413">Isomerase</keyword>
<keyword id="KW-0472">Membrane</keyword>
<keyword id="KW-1185">Reference proteome</keyword>
<keyword id="KW-0799">Topoisomerase</keyword>
<sequence>MSNIQNMSLEDIMGERFGRYSKYIIQERALPDIRDGLKPVQRRILYSMNKDGNTFEKGYRKSAKSVGNIMGNFHPHGDSSIYDAMVRMSQDWKNREILVEMHGNNGSMDGDPPAAMRYTEARLSEIAGYLLQDIEKNTVSFAWNFDDTEKEPTVLPAAFPNLLVNGSSGISAGYATDIPPHNLSEVIDAVVYMIDHPKASLEKLMEFLPGPDFPTGGIIQGADEIKKAYETGKGRVVVRSRTEIEELKGGKQQIIVTEIPYEVNKAVLVKKIDDVRVNNKVPGIVEVRDESDRTGLRIAIELKKEADSQTILNYLLKYTDLQVNYNFNMVAIDHFTPRQVGLQKILSSYISHRKDIIIERSKFDKAKAEKRLHIVEGLIRVLSILDEIIALIRSSDNKADAKENLKVSYDFSEEQAEAIVTLQLYRLTNTDIVTLQNEENDLRDLITTLSAIIGDEATMYNVMKRELREVKKKFANPRLSELQAESQIIEIDTASLIAEEETFVSVTRGGYLKRTSPRSFNASSLEEVGKRDDDELIFVKQAKTTEHLLLFTTLGNVIYRPIHELTDLRWKDIGEHLSQTISNFATEEEILYADIVTSFDQGLYVAVTQNGFIKRFDRKELSPWRTYKSKSTKYVKLKDDKDRVVTLSPVIMEDLLLVTKNGYALRFSSQEVPIQGLKSAGVKGINLKNDDSLASAFAVTSNSFFVLTQRGSLKRMAVDDIPQTSRANRGLLVLRELKTKPHRVFLAGGVQSDTSAEQFDLFTDIPEEETNQQMLEVISKTGQTYEIALETLSLSERISNGSFISDTISDQEVLVARTR</sequence>